<comment type="function">
    <text evidence="1 2">A bifunctional enzyme responsible for the oxidation and isomerization of 3beta-hydroxy-Delta(5)-steroid precursors to 3-oxo-Delta(4)-steroids, an essential step in steroid hormone biosynthesis. Specifically catalyzes the conversion of pregnenolone to progesterone, 17alpha-hydroxypregnenolone to 17alpha-hydroxyprogesterone, dehydroepiandrosterone (DHEA) to 4-androstenedione, and androstenediol to testosterone. Additionally, catalyzes the interconversion between 3beta-hydroxy and 3-oxo-5alpha-androstane steroids controlling the bioavalability of the active forms. Specifically converts dihydrotestosterone to its inactive form 5alpha-androstanediol, that does not bind androgen receptor/AR. Also converts androstanedione, a precursor of testosterone and estrone, to epiandrosterone. Expected to use NAD(+) as preferred electron donor for the 3-beta-hydroxy-steroid dehydrogenase activity and NADPH for the 3-ketosteroid reductase activity.</text>
</comment>
<comment type="catalytic activity">
    <reaction evidence="2">
        <text>a 3beta-hydroxy-Delta(5)-steroid + NAD(+) = a 3-oxo-Delta(5)-steroid + NADH + H(+)</text>
        <dbReference type="Rhea" id="RHEA:24076"/>
        <dbReference type="ChEBI" id="CHEBI:1722"/>
        <dbReference type="ChEBI" id="CHEBI:15378"/>
        <dbReference type="ChEBI" id="CHEBI:47907"/>
        <dbReference type="ChEBI" id="CHEBI:57540"/>
        <dbReference type="ChEBI" id="CHEBI:57945"/>
        <dbReference type="EC" id="1.1.1.145"/>
    </reaction>
</comment>
<comment type="catalytic activity">
    <reaction evidence="2">
        <text>pregnenolone + NAD(+) = pregn-5-ene-3,20-dione + NADH + H(+)</text>
        <dbReference type="Rhea" id="RHEA:43924"/>
        <dbReference type="ChEBI" id="CHEBI:15378"/>
        <dbReference type="ChEBI" id="CHEBI:16581"/>
        <dbReference type="ChEBI" id="CHEBI:57540"/>
        <dbReference type="ChEBI" id="CHEBI:57945"/>
        <dbReference type="ChEBI" id="CHEBI:63837"/>
    </reaction>
</comment>
<comment type="catalytic activity">
    <reaction evidence="2">
        <text>3beta-hydroxyandrost-5-en-17-one + NAD(+) = androst-5-ene-3,17-dione + NADH + H(+)</text>
        <dbReference type="Rhea" id="RHEA:43932"/>
        <dbReference type="ChEBI" id="CHEBI:15378"/>
        <dbReference type="ChEBI" id="CHEBI:28689"/>
        <dbReference type="ChEBI" id="CHEBI:57540"/>
        <dbReference type="ChEBI" id="CHEBI:57945"/>
        <dbReference type="ChEBI" id="CHEBI:83865"/>
        <dbReference type="EC" id="1.1.1.145"/>
    </reaction>
</comment>
<comment type="catalytic activity">
    <reaction evidence="2">
        <text>androst-5-en-3beta,17beta-diol + NAD(+) = 17beta-hydroxy-androst-5-en-3-one + NADH + H(+)</text>
        <dbReference type="Rhea" id="RHEA:56932"/>
        <dbReference type="ChEBI" id="CHEBI:2710"/>
        <dbReference type="ChEBI" id="CHEBI:15378"/>
        <dbReference type="ChEBI" id="CHEBI:57540"/>
        <dbReference type="ChEBI" id="CHEBI:57945"/>
        <dbReference type="ChEBI" id="CHEBI:141179"/>
    </reaction>
</comment>
<comment type="catalytic activity">
    <reaction evidence="2">
        <text>a 3beta-hydroxysteroid + NADP(+) = a 3-oxosteroid + NADPH + H(+)</text>
        <dbReference type="Rhea" id="RHEA:34787"/>
        <dbReference type="ChEBI" id="CHEBI:15378"/>
        <dbReference type="ChEBI" id="CHEBI:36836"/>
        <dbReference type="ChEBI" id="CHEBI:47788"/>
        <dbReference type="ChEBI" id="CHEBI:57783"/>
        <dbReference type="ChEBI" id="CHEBI:58349"/>
        <dbReference type="EC" id="1.1.1.270"/>
    </reaction>
</comment>
<comment type="catalytic activity">
    <reaction evidence="2">
        <text>5alpha-androstane-3beta,17beta-diol + NADP(+) = 17beta-hydroxy-5alpha-androstan-3-one + NADPH + H(+)</text>
        <dbReference type="Rhea" id="RHEA:16297"/>
        <dbReference type="ChEBI" id="CHEBI:15378"/>
        <dbReference type="ChEBI" id="CHEBI:16330"/>
        <dbReference type="ChEBI" id="CHEBI:18329"/>
        <dbReference type="ChEBI" id="CHEBI:57783"/>
        <dbReference type="ChEBI" id="CHEBI:58349"/>
        <dbReference type="EC" id="1.1.1.210"/>
    </reaction>
</comment>
<comment type="catalytic activity">
    <reaction evidence="2">
        <text>3beta-hydroxy-5alpha-androstan-17-one + NADP(+) = 5alpha-androstan-3,17-dione + NADPH + H(+)</text>
        <dbReference type="Rhea" id="RHEA:56916"/>
        <dbReference type="ChEBI" id="CHEBI:15378"/>
        <dbReference type="ChEBI" id="CHEBI:15994"/>
        <dbReference type="ChEBI" id="CHEBI:57783"/>
        <dbReference type="ChEBI" id="CHEBI:58349"/>
        <dbReference type="ChEBI" id="CHEBI:541975"/>
    </reaction>
</comment>
<comment type="catalytic activity">
    <reaction evidence="2">
        <text>a 3-oxo-Delta(5)-steroid = a 3-oxo-Delta(4)-steroid</text>
        <dbReference type="Rhea" id="RHEA:14709"/>
        <dbReference type="ChEBI" id="CHEBI:47907"/>
        <dbReference type="ChEBI" id="CHEBI:47909"/>
        <dbReference type="EC" id="5.3.3.1"/>
    </reaction>
</comment>
<comment type="catalytic activity">
    <reaction evidence="2">
        <text>pregn-5-ene-3,20-dione = progesterone</text>
        <dbReference type="Rhea" id="RHEA:43928"/>
        <dbReference type="ChEBI" id="CHEBI:17026"/>
        <dbReference type="ChEBI" id="CHEBI:63837"/>
    </reaction>
</comment>
<comment type="catalytic activity">
    <reaction evidence="2">
        <text>androst-5-ene-3,17-dione = androst-4-ene-3,17-dione</text>
        <dbReference type="Rhea" id="RHEA:43936"/>
        <dbReference type="ChEBI" id="CHEBI:16422"/>
        <dbReference type="ChEBI" id="CHEBI:83865"/>
    </reaction>
</comment>
<comment type="catalytic activity">
    <reaction evidence="2">
        <text>17beta-hydroxy-androst-5-en-3-one = testosterone</text>
        <dbReference type="Rhea" id="RHEA:56936"/>
        <dbReference type="ChEBI" id="CHEBI:17347"/>
        <dbReference type="ChEBI" id="CHEBI:141179"/>
    </reaction>
</comment>
<comment type="catalytic activity">
    <reaction evidence="1">
        <text>5alpha-androstane-3beta,17beta-diol + NAD(+) = 17beta-hydroxy-5alpha-androstan-3-one + NADH + H(+)</text>
        <dbReference type="Rhea" id="RHEA:42184"/>
        <dbReference type="ChEBI" id="CHEBI:15378"/>
        <dbReference type="ChEBI" id="CHEBI:16330"/>
        <dbReference type="ChEBI" id="CHEBI:18329"/>
        <dbReference type="ChEBI" id="CHEBI:57540"/>
        <dbReference type="ChEBI" id="CHEBI:57945"/>
    </reaction>
</comment>
<comment type="pathway">
    <text evidence="2">Steroid hormone biosynthesis.</text>
</comment>
<comment type="pathway">
    <text evidence="2">Steroid metabolism.</text>
</comment>
<comment type="subcellular location">
    <subcellularLocation>
        <location>Endoplasmic reticulum membrane</location>
        <topology>Single-pass membrane protein</topology>
    </subcellularLocation>
    <subcellularLocation>
        <location>Mitochondrion membrane</location>
        <topology>Single-pass membrane protein</topology>
    </subcellularLocation>
</comment>
<comment type="tissue specificity">
    <text>Steroidogenic tissues (includes testes, ovaries and adrenal glands).</text>
</comment>
<comment type="similarity">
    <text evidence="5">Belongs to the 3-beta-HSD family.</text>
</comment>
<sequence>MAGWSCLVTGAGGFVGQRIIKMLVQEKELQEVRALDKVFRPETKEEFSKLQTKTKVTVLEGDILDAQCLRRACQGISVVIHTAAVIDVTGVIPRQTILDVNLKGTQNLLEACVQASVPAFIFCSSVDVAGPNSYKKIVLNGHEEQNHESTWSDPYPYSKKMAEKAVLAANGSMLKNGGTLNTCALRPMYIYGERSPFIFNAIIRALKNKGILCVTGKFSIANPVYVENVAWAHILAARGLRDPKKSTSIQGQFYYISDDTPHQSYDDLNYTLSKEWGLRPNASWSLPLPLLYWLAFLLETVSFLLRPVYRYRPLFNRHLITLSNSTFTFSYKKAQRDLGYEPLVNWEEAKQKTSEWIGTIVEQHREILDTKCQ</sequence>
<name>3BHS1_MOUSE</name>
<dbReference type="EC" id="1.1.1.145" evidence="2"/>
<dbReference type="EC" id="1.1.1.270" evidence="2"/>
<dbReference type="EC" id="1.1.1.210" evidence="2"/>
<dbReference type="EC" id="5.3.3.1" evidence="2"/>
<dbReference type="EMBL" id="M58567">
    <property type="protein sequence ID" value="AAA37860.1"/>
    <property type="molecule type" value="mRNA"/>
</dbReference>
<dbReference type="EMBL" id="BC052659">
    <property type="protein sequence ID" value="AAH52659.1"/>
    <property type="molecule type" value="mRNA"/>
</dbReference>
<dbReference type="CCDS" id="CCDS17670.1"/>
<dbReference type="PIR" id="I49762">
    <property type="entry name" value="I49762"/>
</dbReference>
<dbReference type="RefSeq" id="NP_001291729.1">
    <property type="nucleotide sequence ID" value="NM_001304800.1"/>
</dbReference>
<dbReference type="RefSeq" id="NP_032319.1">
    <property type="nucleotide sequence ID" value="NM_008293.4"/>
</dbReference>
<dbReference type="RefSeq" id="XP_006501099.1">
    <property type="nucleotide sequence ID" value="XM_006501036.3"/>
</dbReference>
<dbReference type="SMR" id="P24815"/>
<dbReference type="BioGRID" id="200437">
    <property type="interactions" value="1"/>
</dbReference>
<dbReference type="FunCoup" id="P24815">
    <property type="interactions" value="124"/>
</dbReference>
<dbReference type="STRING" id="10090.ENSMUSP00000102630"/>
<dbReference type="iPTMnet" id="P24815"/>
<dbReference type="PhosphoSitePlus" id="P24815"/>
<dbReference type="SwissPalm" id="P24815"/>
<dbReference type="jPOST" id="P24815"/>
<dbReference type="PaxDb" id="10090-ENSMUSP00000102630"/>
<dbReference type="ProteomicsDB" id="296444"/>
<dbReference type="DNASU" id="15492"/>
<dbReference type="Ensembl" id="ENSMUST00000029465.10">
    <property type="protein sequence ID" value="ENSMUSP00000029465.8"/>
    <property type="gene ID" value="ENSMUSG00000027871.17"/>
</dbReference>
<dbReference type="Ensembl" id="ENSMUST00000107016.10">
    <property type="protein sequence ID" value="ENSMUSP00000102630.4"/>
    <property type="gene ID" value="ENSMUSG00000027871.17"/>
</dbReference>
<dbReference type="GeneID" id="15492"/>
<dbReference type="KEGG" id="mmu:15492"/>
<dbReference type="UCSC" id="uc008qqh.2">
    <property type="organism name" value="mouse"/>
</dbReference>
<dbReference type="AGR" id="MGI:96233"/>
<dbReference type="CTD" id="3283"/>
<dbReference type="MGI" id="MGI:96233">
    <property type="gene designation" value="Hsd3b1"/>
</dbReference>
<dbReference type="VEuPathDB" id="HostDB:ENSMUSG00000027871"/>
<dbReference type="eggNOG" id="KOG1430">
    <property type="taxonomic scope" value="Eukaryota"/>
</dbReference>
<dbReference type="GeneTree" id="ENSGT00940000155444"/>
<dbReference type="HOGENOM" id="CLU_007383_6_3_1"/>
<dbReference type="InParanoid" id="P24815"/>
<dbReference type="OMA" id="GGKFYFV"/>
<dbReference type="OrthoDB" id="1925334at2759"/>
<dbReference type="PhylomeDB" id="P24815"/>
<dbReference type="TreeFam" id="TF343138"/>
<dbReference type="Reactome" id="R-MMU-193048">
    <property type="pathway name" value="Androgen biosynthesis"/>
</dbReference>
<dbReference type="Reactome" id="R-MMU-193993">
    <property type="pathway name" value="Mineralocorticoid biosynthesis"/>
</dbReference>
<dbReference type="Reactome" id="R-MMU-194002">
    <property type="pathway name" value="Glucocorticoid biosynthesis"/>
</dbReference>
<dbReference type="SABIO-RK" id="P24815"/>
<dbReference type="BioGRID-ORCS" id="15492">
    <property type="hits" value="2 hits in 62 CRISPR screens"/>
</dbReference>
<dbReference type="PRO" id="PR:P24815"/>
<dbReference type="Proteomes" id="UP000000589">
    <property type="component" value="Chromosome 3"/>
</dbReference>
<dbReference type="RNAct" id="P24815">
    <property type="molecule type" value="protein"/>
</dbReference>
<dbReference type="Bgee" id="ENSMUSG00000027871">
    <property type="expression patterns" value="Expressed in adrenal gland and 52 other cell types or tissues"/>
</dbReference>
<dbReference type="ExpressionAtlas" id="P24815">
    <property type="expression patterns" value="baseline and differential"/>
</dbReference>
<dbReference type="GO" id="GO:0005783">
    <property type="term" value="C:endoplasmic reticulum"/>
    <property type="evidence" value="ECO:0000266"/>
    <property type="project" value="MGI"/>
</dbReference>
<dbReference type="GO" id="GO:0005789">
    <property type="term" value="C:endoplasmic reticulum membrane"/>
    <property type="evidence" value="ECO:0007669"/>
    <property type="project" value="UniProtKB-SubCell"/>
</dbReference>
<dbReference type="GO" id="GO:0031966">
    <property type="term" value="C:mitochondrial membrane"/>
    <property type="evidence" value="ECO:0007669"/>
    <property type="project" value="UniProtKB-SubCell"/>
</dbReference>
<dbReference type="GO" id="GO:0005739">
    <property type="term" value="C:mitochondrion"/>
    <property type="evidence" value="ECO:0007005"/>
    <property type="project" value="MGI"/>
</dbReference>
<dbReference type="GO" id="GO:0003854">
    <property type="term" value="F:3-beta-hydroxy-Delta5-steroid dehydrogenase (NAD+) activity"/>
    <property type="evidence" value="ECO:0007669"/>
    <property type="project" value="UniProtKB-EC"/>
</dbReference>
<dbReference type="GO" id="GO:0000253">
    <property type="term" value="F:3-beta-hydroxysteroid 3-dehydrogenase (NADP+) activity"/>
    <property type="evidence" value="ECO:0007669"/>
    <property type="project" value="UniProtKB-EC"/>
</dbReference>
<dbReference type="GO" id="GO:0047024">
    <property type="term" value="F:5-alpha-androstane-3-beta,17-beta-diol dehydrogenase (NADP+) activity"/>
    <property type="evidence" value="ECO:0007669"/>
    <property type="project" value="UniProtKB-EC"/>
</dbReference>
<dbReference type="GO" id="GO:0004769">
    <property type="term" value="F:steroid Delta-isomerase activity"/>
    <property type="evidence" value="ECO:0000314"/>
    <property type="project" value="MGI"/>
</dbReference>
<dbReference type="GO" id="GO:0006702">
    <property type="term" value="P:androgen biosynthetic process"/>
    <property type="evidence" value="ECO:0000314"/>
    <property type="project" value="MGI"/>
</dbReference>
<dbReference type="FunFam" id="3.40.50.720:FF:000220">
    <property type="entry name" value="3 beta-hydroxysteroid dehydrogenase/Delta 5--&gt;4-isomerase type 1"/>
    <property type="match status" value="1"/>
</dbReference>
<dbReference type="Gene3D" id="3.40.50.720">
    <property type="entry name" value="NAD(P)-binding Rossmann-like Domain"/>
    <property type="match status" value="1"/>
</dbReference>
<dbReference type="InterPro" id="IPR002225">
    <property type="entry name" value="3Beta_OHSteriod_DH/Estase"/>
</dbReference>
<dbReference type="InterPro" id="IPR050177">
    <property type="entry name" value="Lipid_A_modif_metabolic_enz"/>
</dbReference>
<dbReference type="InterPro" id="IPR036291">
    <property type="entry name" value="NAD(P)-bd_dom_sf"/>
</dbReference>
<dbReference type="PANTHER" id="PTHR43245">
    <property type="entry name" value="BIFUNCTIONAL POLYMYXIN RESISTANCE PROTEIN ARNA"/>
    <property type="match status" value="1"/>
</dbReference>
<dbReference type="PANTHER" id="PTHR43245:SF51">
    <property type="entry name" value="SHORT CHAIN DEHYDROGENASE_REDUCTASE FAMILY 42E, MEMBER 2"/>
    <property type="match status" value="1"/>
</dbReference>
<dbReference type="Pfam" id="PF01073">
    <property type="entry name" value="3Beta_HSD"/>
    <property type="match status" value="1"/>
</dbReference>
<dbReference type="SUPFAM" id="SSF51735">
    <property type="entry name" value="NAD(P)-binding Rossmann-fold domains"/>
    <property type="match status" value="1"/>
</dbReference>
<organism>
    <name type="scientific">Mus musculus</name>
    <name type="common">Mouse</name>
    <dbReference type="NCBI Taxonomy" id="10090"/>
    <lineage>
        <taxon>Eukaryota</taxon>
        <taxon>Metazoa</taxon>
        <taxon>Chordata</taxon>
        <taxon>Craniata</taxon>
        <taxon>Vertebrata</taxon>
        <taxon>Euteleostomi</taxon>
        <taxon>Mammalia</taxon>
        <taxon>Eutheria</taxon>
        <taxon>Euarchontoglires</taxon>
        <taxon>Glires</taxon>
        <taxon>Rodentia</taxon>
        <taxon>Myomorpha</taxon>
        <taxon>Muroidea</taxon>
        <taxon>Muridae</taxon>
        <taxon>Murinae</taxon>
        <taxon>Mus</taxon>
        <taxon>Mus</taxon>
    </lineage>
</organism>
<feature type="chain" id="PRO_0000087780" description="3 beta-hydroxysteroid dehydrogenase/Delta 5--&gt;4-isomerase type 1">
    <location>
        <begin position="1"/>
        <end position="373"/>
    </location>
</feature>
<feature type="transmembrane region" description="Helical" evidence="4">
    <location>
        <begin position="288"/>
        <end position="308"/>
    </location>
</feature>
<feature type="active site" description="Proton donor" evidence="3">
    <location>
        <position position="159"/>
    </location>
</feature>
<feature type="binding site" evidence="3">
    <location>
        <begin position="10"/>
        <end position="15"/>
    </location>
    <ligand>
        <name>NADP(+)</name>
        <dbReference type="ChEBI" id="CHEBI:58349"/>
    </ligand>
</feature>
<feature type="binding site" evidence="3">
    <location>
        <position position="155"/>
    </location>
    <ligand>
        <name>NADP(+)</name>
        <dbReference type="ChEBI" id="CHEBI:58349"/>
    </ligand>
</feature>
<feature type="binding site" evidence="3">
    <location>
        <position position="159"/>
    </location>
    <ligand>
        <name>NADP(+)</name>
        <dbReference type="ChEBI" id="CHEBI:58349"/>
    </ligand>
</feature>
<feature type="sequence conflict" description="In Ref. 2; AAH52659." evidence="5" ref="2">
    <original>V</original>
    <variation>A</variation>
    <location>
        <position position="128"/>
    </location>
</feature>
<feature type="sequence conflict" description="In Ref. 2; AAH52659." evidence="5" ref="2">
    <original>L</original>
    <variation>S</variation>
    <location>
        <position position="319"/>
    </location>
</feature>
<accession>P24815</accession>
<accession>Q7TQ00</accession>
<keyword id="KW-0256">Endoplasmic reticulum</keyword>
<keyword id="KW-0413">Isomerase</keyword>
<keyword id="KW-0443">Lipid metabolism</keyword>
<keyword id="KW-0472">Membrane</keyword>
<keyword id="KW-0496">Mitochondrion</keyword>
<keyword id="KW-0511">Multifunctional enzyme</keyword>
<keyword id="KW-0520">NAD</keyword>
<keyword id="KW-0521">NADP</keyword>
<keyword id="KW-0560">Oxidoreductase</keyword>
<keyword id="KW-1185">Reference proteome</keyword>
<keyword id="KW-0753">Steroid metabolism</keyword>
<keyword id="KW-0755">Steroidogenesis</keyword>
<keyword id="KW-0812">Transmembrane</keyword>
<keyword id="KW-1133">Transmembrane helix</keyword>
<protein>
    <recommendedName>
        <fullName>3 beta-hydroxysteroid dehydrogenase/Delta 5--&gt;4-isomerase type 1</fullName>
    </recommendedName>
    <alternativeName>
        <fullName evidence="1">3 beta-hydroxysteroid dehydrogenase/Delta 5--&gt;4-isomerase type I</fullName>
        <shortName>3-beta-HSD I</shortName>
    </alternativeName>
    <alternativeName>
        <fullName evidence="1">3-beta-hydroxy-5-ene steroid dehydrogenase</fullName>
    </alternativeName>
    <alternativeName>
        <fullName evidence="1">3-beta-hydroxy-Delta(5)-steroid dehydrogenase</fullName>
        <ecNumber evidence="2">1.1.1.145</ecNumber>
    </alternativeName>
    <alternativeName>
        <fullName evidence="1">3-beta-hydroxysteroid 3-dehydrogenase</fullName>
        <ecNumber evidence="2">1.1.1.270</ecNumber>
    </alternativeName>
    <alternativeName>
        <fullName>Delta-5-3-ketosteroid isomerase</fullName>
    </alternativeName>
    <alternativeName>
        <fullName evidence="1">Dihydrotestosterone oxidoreductase</fullName>
        <ecNumber evidence="2">1.1.1.210</ecNumber>
    </alternativeName>
    <alternativeName>
        <fullName evidence="1">Steroid Delta-isomerase</fullName>
        <ecNumber evidence="2">5.3.3.1</ecNumber>
    </alternativeName>
</protein>
<evidence type="ECO:0000250" key="1">
    <source>
        <dbReference type="UniProtKB" id="P14060"/>
    </source>
</evidence>
<evidence type="ECO:0000250" key="2">
    <source>
        <dbReference type="UniProtKB" id="P22071"/>
    </source>
</evidence>
<evidence type="ECO:0000250" key="3">
    <source>
        <dbReference type="UniProtKB" id="Q12068"/>
    </source>
</evidence>
<evidence type="ECO:0000255" key="4"/>
<evidence type="ECO:0000305" key="5"/>
<evidence type="ECO:0000312" key="6">
    <source>
        <dbReference type="MGI" id="MGI:96233"/>
    </source>
</evidence>
<gene>
    <name evidence="6" type="primary">Hsd3b1</name>
    <name type="synonym">Hsd3b</name>
</gene>
<proteinExistence type="evidence at protein level"/>
<reference key="1">
    <citation type="journal article" date="1991" name="Proc. Natl. Acad. Sci. U.S.A.">
        <title>Multiple forms of mouse 3 beta-hydroxysteroid dehydrogenase/delta 5-delta 4 isomerase and differential expression in gonads, adrenal glands, liver, and kidneys of both sexes.</title>
        <authorList>
            <person name="Bain P.A."/>
            <person name="Yoo M."/>
            <person name="Clarke T."/>
            <person name="Hammond S.H."/>
            <person name="Payne A.H."/>
        </authorList>
    </citation>
    <scope>NUCLEOTIDE SEQUENCE [MRNA]</scope>
    <source>
        <strain>CD-1</strain>
    </source>
</reference>
<reference key="2">
    <citation type="journal article" date="2004" name="Genome Res.">
        <title>The status, quality, and expansion of the NIH full-length cDNA project: the Mammalian Gene Collection (MGC).</title>
        <authorList>
            <consortium name="The MGC Project Team"/>
        </authorList>
    </citation>
    <scope>NUCLEOTIDE SEQUENCE [LARGE SCALE MRNA]</scope>
    <source>
        <strain>C57BL/6J</strain>
        <tissue>Egg</tissue>
    </source>
</reference>
<reference key="3">
    <citation type="journal article" date="2010" name="Cell">
        <title>A tissue-specific atlas of mouse protein phosphorylation and expression.</title>
        <authorList>
            <person name="Huttlin E.L."/>
            <person name="Jedrychowski M.P."/>
            <person name="Elias J.E."/>
            <person name="Goswami T."/>
            <person name="Rad R."/>
            <person name="Beausoleil S.A."/>
            <person name="Villen J."/>
            <person name="Haas W."/>
            <person name="Sowa M.E."/>
            <person name="Gygi S.P."/>
        </authorList>
    </citation>
    <scope>IDENTIFICATION BY MASS SPECTROMETRY [LARGE SCALE ANALYSIS]</scope>
    <source>
        <tissue>Liver</tissue>
        <tissue>Testis</tissue>
    </source>
</reference>